<dbReference type="EMBL" id="AE017244">
    <property type="protein sequence ID" value="AAZ53566.1"/>
    <property type="molecule type" value="Genomic_DNA"/>
</dbReference>
<dbReference type="RefSeq" id="WP_011290066.1">
    <property type="nucleotide sequence ID" value="NC_007332.1"/>
</dbReference>
<dbReference type="SMR" id="Q4A8H3"/>
<dbReference type="KEGG" id="mhp:MHP7448_0192"/>
<dbReference type="HOGENOM" id="CLU_037562_1_0_14"/>
<dbReference type="Proteomes" id="UP000000553">
    <property type="component" value="Chromosome"/>
</dbReference>
<dbReference type="GO" id="GO:1990904">
    <property type="term" value="C:ribonucleoprotein complex"/>
    <property type="evidence" value="ECO:0007669"/>
    <property type="project" value="UniProtKB-KW"/>
</dbReference>
<dbReference type="GO" id="GO:0005840">
    <property type="term" value="C:ribosome"/>
    <property type="evidence" value="ECO:0007669"/>
    <property type="project" value="UniProtKB-KW"/>
</dbReference>
<dbReference type="GO" id="GO:0019843">
    <property type="term" value="F:rRNA binding"/>
    <property type="evidence" value="ECO:0007669"/>
    <property type="project" value="UniProtKB-UniRule"/>
</dbReference>
<dbReference type="GO" id="GO:0003735">
    <property type="term" value="F:structural constituent of ribosome"/>
    <property type="evidence" value="ECO:0007669"/>
    <property type="project" value="InterPro"/>
</dbReference>
<dbReference type="GO" id="GO:0006412">
    <property type="term" value="P:translation"/>
    <property type="evidence" value="ECO:0007669"/>
    <property type="project" value="UniProtKB-UniRule"/>
</dbReference>
<dbReference type="Gene3D" id="3.30.70.330">
    <property type="match status" value="1"/>
</dbReference>
<dbReference type="HAMAP" id="MF_01369_B">
    <property type="entry name" value="Ribosomal_uL23_B"/>
    <property type="match status" value="1"/>
</dbReference>
<dbReference type="InterPro" id="IPR012677">
    <property type="entry name" value="Nucleotide-bd_a/b_plait_sf"/>
</dbReference>
<dbReference type="InterPro" id="IPR013025">
    <property type="entry name" value="Ribosomal_uL23-like"/>
</dbReference>
<dbReference type="InterPro" id="IPR012678">
    <property type="entry name" value="Ribosomal_uL23/eL15/eS24_sf"/>
</dbReference>
<dbReference type="NCBIfam" id="NF004363">
    <property type="entry name" value="PRK05738.2-4"/>
    <property type="match status" value="1"/>
</dbReference>
<dbReference type="NCBIfam" id="NF008918">
    <property type="entry name" value="PRK12280.1-1"/>
    <property type="match status" value="1"/>
</dbReference>
<dbReference type="NCBIfam" id="NF008919">
    <property type="entry name" value="PRK12280.1-3"/>
    <property type="match status" value="1"/>
</dbReference>
<dbReference type="PANTHER" id="PTHR11620">
    <property type="entry name" value="60S RIBOSOMAL PROTEIN L23A"/>
    <property type="match status" value="1"/>
</dbReference>
<dbReference type="Pfam" id="PF00276">
    <property type="entry name" value="Ribosomal_L23"/>
    <property type="match status" value="1"/>
</dbReference>
<dbReference type="SUPFAM" id="SSF54189">
    <property type="entry name" value="Ribosomal proteins S24e, L23 and L15e"/>
    <property type="match status" value="1"/>
</dbReference>
<reference key="1">
    <citation type="journal article" date="2005" name="J. Bacteriol.">
        <title>Swine and poultry pathogens: the complete genome sequences of two strains of Mycoplasma hyopneumoniae and a strain of Mycoplasma synoviae.</title>
        <authorList>
            <person name="Vasconcelos A.T.R."/>
            <person name="Ferreira H.B."/>
            <person name="Bizarro C.V."/>
            <person name="Bonatto S.L."/>
            <person name="Carvalho M.O."/>
            <person name="Pinto P.M."/>
            <person name="Almeida D.F."/>
            <person name="Almeida L.G.P."/>
            <person name="Almeida R."/>
            <person name="Alves-Junior L."/>
            <person name="Assuncao E.N."/>
            <person name="Azevedo V.A.C."/>
            <person name="Bogo M.R."/>
            <person name="Brigido M.M."/>
            <person name="Brocchi M."/>
            <person name="Burity H.A."/>
            <person name="Camargo A.A."/>
            <person name="Camargo S.S."/>
            <person name="Carepo M.S."/>
            <person name="Carraro D.M."/>
            <person name="de Mattos Cascardo J.C."/>
            <person name="Castro L.A."/>
            <person name="Cavalcanti G."/>
            <person name="Chemale G."/>
            <person name="Collevatti R.G."/>
            <person name="Cunha C.W."/>
            <person name="Dallagiovanna B."/>
            <person name="Dambros B.P."/>
            <person name="Dellagostin O.A."/>
            <person name="Falcao C."/>
            <person name="Fantinatti-Garboggini F."/>
            <person name="Felipe M.S.S."/>
            <person name="Fiorentin L."/>
            <person name="Franco G.R."/>
            <person name="Freitas N.S.A."/>
            <person name="Frias D."/>
            <person name="Grangeiro T.B."/>
            <person name="Grisard E.C."/>
            <person name="Guimaraes C.T."/>
            <person name="Hungria M."/>
            <person name="Jardim S.N."/>
            <person name="Krieger M.A."/>
            <person name="Laurino J.P."/>
            <person name="Lima L.F.A."/>
            <person name="Lopes M.I."/>
            <person name="Loreto E.L.S."/>
            <person name="Madeira H.M.F."/>
            <person name="Manfio G.P."/>
            <person name="Maranhao A.Q."/>
            <person name="Martinkovics C.T."/>
            <person name="Medeiros S.R.B."/>
            <person name="Moreira M.A.M."/>
            <person name="Neiva M."/>
            <person name="Ramalho-Neto C.E."/>
            <person name="Nicolas M.F."/>
            <person name="Oliveira S.C."/>
            <person name="Paixao R.F.C."/>
            <person name="Pedrosa F.O."/>
            <person name="Pena S.D.J."/>
            <person name="Pereira M."/>
            <person name="Pereira-Ferrari L."/>
            <person name="Piffer I."/>
            <person name="Pinto L.S."/>
            <person name="Potrich D.P."/>
            <person name="Salim A.C.M."/>
            <person name="Santos F.R."/>
            <person name="Schmitt R."/>
            <person name="Schneider M.P.C."/>
            <person name="Schrank A."/>
            <person name="Schrank I.S."/>
            <person name="Schuck A.F."/>
            <person name="Seuanez H.N."/>
            <person name="Silva D.W."/>
            <person name="Silva R."/>
            <person name="Silva S.C."/>
            <person name="Soares C.M.A."/>
            <person name="Souza K.R.L."/>
            <person name="Souza R.C."/>
            <person name="Staats C.C."/>
            <person name="Steffens M.B.R."/>
            <person name="Teixeira S.M.R."/>
            <person name="Urmenyi T.P."/>
            <person name="Vainstein M.H."/>
            <person name="Zuccherato L.W."/>
            <person name="Simpson A.J.G."/>
            <person name="Zaha A."/>
        </authorList>
    </citation>
    <scope>NUCLEOTIDE SEQUENCE [LARGE SCALE GENOMIC DNA]</scope>
    <source>
        <strain>7448</strain>
    </source>
</reference>
<feature type="chain" id="PRO_0000272776" description="Large ribosomal subunit protein uL23">
    <location>
        <begin position="1"/>
        <end position="167"/>
    </location>
</feature>
<feature type="region of interest" description="Large ribosomal subunit protein uL23" evidence="1">
    <location>
        <begin position="1"/>
        <end position="130"/>
    </location>
</feature>
<feature type="region of interest" description="Disordered" evidence="2">
    <location>
        <begin position="91"/>
        <end position="112"/>
    </location>
</feature>
<feature type="region of interest" description="Unknown">
    <location>
        <begin position="131"/>
        <end position="167"/>
    </location>
</feature>
<feature type="region of interest" description="Disordered" evidence="2">
    <location>
        <begin position="137"/>
        <end position="167"/>
    </location>
</feature>
<feature type="compositionally biased region" description="Basic and acidic residues" evidence="2">
    <location>
        <begin position="97"/>
        <end position="112"/>
    </location>
</feature>
<feature type="compositionally biased region" description="Basic and acidic residues" evidence="2">
    <location>
        <begin position="137"/>
        <end position="157"/>
    </location>
</feature>
<feature type="compositionally biased region" description="Polar residues" evidence="2">
    <location>
        <begin position="158"/>
        <end position="167"/>
    </location>
</feature>
<comment type="function">
    <text evidence="1">One of the early assembly proteins it binds 23S rRNA. One of the proteins that surrounds the polypeptide exit tunnel on the outside of the ribosome. Forms the main docking site for trigger factor binding to the ribosome.</text>
</comment>
<comment type="subunit">
    <text evidence="1">Part of the 50S ribosomal subunit. Contacts protein L29, and trigger factor when it is bound to the ribosome.</text>
</comment>
<comment type="similarity">
    <text evidence="1">Belongs to the universal ribosomal protein uL23 family.</text>
</comment>
<protein>
    <recommendedName>
        <fullName evidence="1">Large ribosomal subunit protein uL23</fullName>
    </recommendedName>
    <alternativeName>
        <fullName>50S ribosomal protein L23</fullName>
    </alternativeName>
</protein>
<evidence type="ECO:0000255" key="1">
    <source>
        <dbReference type="HAMAP-Rule" id="MF_01369"/>
    </source>
</evidence>
<evidence type="ECO:0000256" key="2">
    <source>
        <dbReference type="SAM" id="MobiDB-lite"/>
    </source>
</evidence>
<keyword id="KW-0687">Ribonucleoprotein</keyword>
<keyword id="KW-0689">Ribosomal protein</keyword>
<keyword id="KW-0694">RNA-binding</keyword>
<keyword id="KW-0699">rRNA-binding</keyword>
<proteinExistence type="inferred from homology"/>
<organism>
    <name type="scientific">Mesomycoplasma hyopneumoniae (strain 7448)</name>
    <name type="common">Mycoplasma hyopneumoniae</name>
    <dbReference type="NCBI Taxonomy" id="262722"/>
    <lineage>
        <taxon>Bacteria</taxon>
        <taxon>Bacillati</taxon>
        <taxon>Mycoplasmatota</taxon>
        <taxon>Mycoplasmoidales</taxon>
        <taxon>Metamycoplasmataceae</taxon>
        <taxon>Mesomycoplasma</taxon>
    </lineage>
</organism>
<gene>
    <name evidence="1" type="primary">rplW</name>
    <name type="ordered locus">MHP7448_0192</name>
</gene>
<sequence>MNVNEIIKGPILTEKSYQLMSSGVYSFKVSPKTNRSETKKAVEYIFNVKVEKVNIFTVPKKEKKLGKSKGFTTKYKKALVKLMPGYTINLFEDESPQDQKDSETISENTDEKAKIAKKKAELEAKNKEIAEKLAKKQAELAKKESETNENQEKKIENQTENQENSAK</sequence>
<accession>Q4A8H3</accession>
<name>RL23_MESH7</name>